<accession>A5FLM7</accession>
<organism>
    <name type="scientific">Flavobacterium johnsoniae (strain ATCC 17061 / DSM 2064 / JCM 8514 / BCRC 14874 / CCUG 350202 / NBRC 14942 / NCIMB 11054 / UW101)</name>
    <name type="common">Cytophaga johnsonae</name>
    <dbReference type="NCBI Taxonomy" id="376686"/>
    <lineage>
        <taxon>Bacteria</taxon>
        <taxon>Pseudomonadati</taxon>
        <taxon>Bacteroidota</taxon>
        <taxon>Flavobacteriia</taxon>
        <taxon>Flavobacteriales</taxon>
        <taxon>Flavobacteriaceae</taxon>
        <taxon>Flavobacterium</taxon>
    </lineage>
</organism>
<evidence type="ECO:0000255" key="1">
    <source>
        <dbReference type="HAMAP-Rule" id="MF_00098"/>
    </source>
</evidence>
<comment type="function">
    <text evidence="1">Is required not only for elongation of protein synthesis but also for the initiation of all mRNA translation through initiator tRNA(fMet) aminoacylation.</text>
</comment>
<comment type="catalytic activity">
    <reaction evidence="1">
        <text>tRNA(Met) + L-methionine + ATP = L-methionyl-tRNA(Met) + AMP + diphosphate</text>
        <dbReference type="Rhea" id="RHEA:13481"/>
        <dbReference type="Rhea" id="RHEA-COMP:9667"/>
        <dbReference type="Rhea" id="RHEA-COMP:9698"/>
        <dbReference type="ChEBI" id="CHEBI:30616"/>
        <dbReference type="ChEBI" id="CHEBI:33019"/>
        <dbReference type="ChEBI" id="CHEBI:57844"/>
        <dbReference type="ChEBI" id="CHEBI:78442"/>
        <dbReference type="ChEBI" id="CHEBI:78530"/>
        <dbReference type="ChEBI" id="CHEBI:456215"/>
        <dbReference type="EC" id="6.1.1.10"/>
    </reaction>
</comment>
<comment type="cofactor">
    <cofactor evidence="1">
        <name>Zn(2+)</name>
        <dbReference type="ChEBI" id="CHEBI:29105"/>
    </cofactor>
    <text evidence="1">Binds 1 zinc ion per subunit.</text>
</comment>
<comment type="subunit">
    <text evidence="1">Homodimer.</text>
</comment>
<comment type="subcellular location">
    <subcellularLocation>
        <location evidence="1">Cytoplasm</location>
    </subcellularLocation>
</comment>
<comment type="similarity">
    <text evidence="1">Belongs to the class-I aminoacyl-tRNA synthetase family. MetG type 1 subfamily.</text>
</comment>
<protein>
    <recommendedName>
        <fullName evidence="1">Methionine--tRNA ligase</fullName>
        <ecNumber evidence="1">6.1.1.10</ecNumber>
    </recommendedName>
    <alternativeName>
        <fullName evidence="1">Methionyl-tRNA synthetase</fullName>
        <shortName evidence="1">MetRS</shortName>
    </alternativeName>
</protein>
<name>SYM_FLAJ1</name>
<gene>
    <name evidence="1" type="primary">metG</name>
    <name type="ordered locus">Fjoh_0857</name>
</gene>
<sequence length="711" mass="80194">MTQNPKRYTITAALPYTNGPIHIGHLAGVYVPADIYSRYLRLQGKDVAFICGSDEHGVAISMKAKKEGVTPQEVIDKYDGIIRKSFADFGISFNNYSRTSAKIHHDTASEFFRTLYDKGDFIEEVTEQLYDAKANQFLADRFVVGTCPKCDNPEAYGDQCEKCGSTLNATDLINPKSTITGETPILKETKHWFLPLDRYSDFLTKWILEGHKNDWKPNVYGQVKSWIDGGLEPRAVTRDLDWGIDVPVEGAEGKKLYVWFDAPIGYISSTKEWAAREGKDWEPYWKDEETKLVHFIGKDNIVFHCIIFPAMLKAEGSYILPDNVPANEFLNLEGNKLSTSKNWAVWLHEYLEEFPDKQDVLRYALTSNAPETKDNDFTWKDFQARNNNELVAIFGNFVNRVVVLTNKYYDGVIPTPNEFTEIDEQTLAELKAYPAVISSSVERYRFREALGELMNVARLGNKYLADEEPWKVMKDNPERVKTQMYVALQIAAALSVLAEPFLPFTAAKLSKILNLGDLKEHFEGFSKFLKERHQDANDIIIDKTLGWNDISENSDLIPAGHKIGEAELLFAKIEDEEIQKQIDKLEATKTANIAENQKAEPQKDLIQFEDFAKMDIRIGTILEAEKMPKANKLLVLKVDTGIDVRTIVSGIAESFSPEEIIGKRVSVLANLAPRALRGVESQGMILMTTNAEGKLVFVNPDADAPNGATVN</sequence>
<dbReference type="EC" id="6.1.1.10" evidence="1"/>
<dbReference type="EMBL" id="CP000685">
    <property type="protein sequence ID" value="ABQ03891.1"/>
    <property type="molecule type" value="Genomic_DNA"/>
</dbReference>
<dbReference type="RefSeq" id="WP_012022944.1">
    <property type="nucleotide sequence ID" value="NZ_MUGZ01000025.1"/>
</dbReference>
<dbReference type="SMR" id="A5FLM7"/>
<dbReference type="STRING" id="376686.Fjoh_0857"/>
<dbReference type="KEGG" id="fjo:Fjoh_0857"/>
<dbReference type="eggNOG" id="COG0073">
    <property type="taxonomic scope" value="Bacteria"/>
</dbReference>
<dbReference type="eggNOG" id="COG0143">
    <property type="taxonomic scope" value="Bacteria"/>
</dbReference>
<dbReference type="HOGENOM" id="CLU_009710_1_2_10"/>
<dbReference type="OrthoDB" id="9810191at2"/>
<dbReference type="Proteomes" id="UP000006694">
    <property type="component" value="Chromosome"/>
</dbReference>
<dbReference type="GO" id="GO:0005829">
    <property type="term" value="C:cytosol"/>
    <property type="evidence" value="ECO:0007669"/>
    <property type="project" value="TreeGrafter"/>
</dbReference>
<dbReference type="GO" id="GO:0005524">
    <property type="term" value="F:ATP binding"/>
    <property type="evidence" value="ECO:0007669"/>
    <property type="project" value="UniProtKB-UniRule"/>
</dbReference>
<dbReference type="GO" id="GO:0046872">
    <property type="term" value="F:metal ion binding"/>
    <property type="evidence" value="ECO:0007669"/>
    <property type="project" value="UniProtKB-KW"/>
</dbReference>
<dbReference type="GO" id="GO:0004825">
    <property type="term" value="F:methionine-tRNA ligase activity"/>
    <property type="evidence" value="ECO:0007669"/>
    <property type="project" value="UniProtKB-UniRule"/>
</dbReference>
<dbReference type="GO" id="GO:0000049">
    <property type="term" value="F:tRNA binding"/>
    <property type="evidence" value="ECO:0007669"/>
    <property type="project" value="UniProtKB-KW"/>
</dbReference>
<dbReference type="GO" id="GO:0006431">
    <property type="term" value="P:methionyl-tRNA aminoacylation"/>
    <property type="evidence" value="ECO:0007669"/>
    <property type="project" value="UniProtKB-UniRule"/>
</dbReference>
<dbReference type="CDD" id="cd07957">
    <property type="entry name" value="Anticodon_Ia_Met"/>
    <property type="match status" value="1"/>
</dbReference>
<dbReference type="CDD" id="cd00814">
    <property type="entry name" value="MetRS_core"/>
    <property type="match status" value="1"/>
</dbReference>
<dbReference type="CDD" id="cd02800">
    <property type="entry name" value="tRNA_bind_EcMetRS_like"/>
    <property type="match status" value="1"/>
</dbReference>
<dbReference type="FunFam" id="2.20.28.20:FF:000001">
    <property type="entry name" value="Methionine--tRNA ligase"/>
    <property type="match status" value="1"/>
</dbReference>
<dbReference type="FunFam" id="2.40.50.140:FF:000042">
    <property type="entry name" value="Methionine--tRNA ligase"/>
    <property type="match status" value="1"/>
</dbReference>
<dbReference type="Gene3D" id="3.40.50.620">
    <property type="entry name" value="HUPs"/>
    <property type="match status" value="1"/>
</dbReference>
<dbReference type="Gene3D" id="1.10.730.10">
    <property type="entry name" value="Isoleucyl-tRNA Synthetase, Domain 1"/>
    <property type="match status" value="1"/>
</dbReference>
<dbReference type="Gene3D" id="2.20.28.20">
    <property type="entry name" value="Methionyl-tRNA synthetase, Zn-domain"/>
    <property type="match status" value="1"/>
</dbReference>
<dbReference type="Gene3D" id="2.40.50.140">
    <property type="entry name" value="Nucleic acid-binding proteins"/>
    <property type="match status" value="1"/>
</dbReference>
<dbReference type="HAMAP" id="MF_00098">
    <property type="entry name" value="Met_tRNA_synth_type1"/>
    <property type="match status" value="1"/>
</dbReference>
<dbReference type="InterPro" id="IPR001412">
    <property type="entry name" value="aa-tRNA-synth_I_CS"/>
</dbReference>
<dbReference type="InterPro" id="IPR041872">
    <property type="entry name" value="Anticodon_Met"/>
</dbReference>
<dbReference type="InterPro" id="IPR004495">
    <property type="entry name" value="Met-tRNA-synth_bsu_C"/>
</dbReference>
<dbReference type="InterPro" id="IPR023458">
    <property type="entry name" value="Met-tRNA_ligase_1"/>
</dbReference>
<dbReference type="InterPro" id="IPR014758">
    <property type="entry name" value="Met-tRNA_synth"/>
</dbReference>
<dbReference type="InterPro" id="IPR015413">
    <property type="entry name" value="Methionyl/Leucyl_tRNA_Synth"/>
</dbReference>
<dbReference type="InterPro" id="IPR033911">
    <property type="entry name" value="MetRS_core"/>
</dbReference>
<dbReference type="InterPro" id="IPR029038">
    <property type="entry name" value="MetRS_Zn"/>
</dbReference>
<dbReference type="InterPro" id="IPR012340">
    <property type="entry name" value="NA-bd_OB-fold"/>
</dbReference>
<dbReference type="InterPro" id="IPR014729">
    <property type="entry name" value="Rossmann-like_a/b/a_fold"/>
</dbReference>
<dbReference type="InterPro" id="IPR002547">
    <property type="entry name" value="tRNA-bd_dom"/>
</dbReference>
<dbReference type="InterPro" id="IPR009080">
    <property type="entry name" value="tRNAsynth_Ia_anticodon-bd"/>
</dbReference>
<dbReference type="NCBIfam" id="TIGR00398">
    <property type="entry name" value="metG"/>
    <property type="match status" value="1"/>
</dbReference>
<dbReference type="NCBIfam" id="TIGR00399">
    <property type="entry name" value="metG_C_term"/>
    <property type="match status" value="1"/>
</dbReference>
<dbReference type="NCBIfam" id="NF001100">
    <property type="entry name" value="PRK00133.1"/>
    <property type="match status" value="1"/>
</dbReference>
<dbReference type="PANTHER" id="PTHR45765">
    <property type="entry name" value="METHIONINE--TRNA LIGASE"/>
    <property type="match status" value="1"/>
</dbReference>
<dbReference type="PANTHER" id="PTHR45765:SF1">
    <property type="entry name" value="METHIONINE--TRNA LIGASE, CYTOPLASMIC"/>
    <property type="match status" value="1"/>
</dbReference>
<dbReference type="Pfam" id="PF19303">
    <property type="entry name" value="Anticodon_3"/>
    <property type="match status" value="1"/>
</dbReference>
<dbReference type="Pfam" id="PF09334">
    <property type="entry name" value="tRNA-synt_1g"/>
    <property type="match status" value="1"/>
</dbReference>
<dbReference type="Pfam" id="PF01588">
    <property type="entry name" value="tRNA_bind"/>
    <property type="match status" value="1"/>
</dbReference>
<dbReference type="PRINTS" id="PR01041">
    <property type="entry name" value="TRNASYNTHMET"/>
</dbReference>
<dbReference type="SUPFAM" id="SSF47323">
    <property type="entry name" value="Anticodon-binding domain of a subclass of class I aminoacyl-tRNA synthetases"/>
    <property type="match status" value="1"/>
</dbReference>
<dbReference type="SUPFAM" id="SSF57770">
    <property type="entry name" value="Methionyl-tRNA synthetase (MetRS), Zn-domain"/>
    <property type="match status" value="1"/>
</dbReference>
<dbReference type="SUPFAM" id="SSF50249">
    <property type="entry name" value="Nucleic acid-binding proteins"/>
    <property type="match status" value="1"/>
</dbReference>
<dbReference type="SUPFAM" id="SSF52374">
    <property type="entry name" value="Nucleotidylyl transferase"/>
    <property type="match status" value="1"/>
</dbReference>
<dbReference type="PROSITE" id="PS00178">
    <property type="entry name" value="AA_TRNA_LIGASE_I"/>
    <property type="match status" value="1"/>
</dbReference>
<dbReference type="PROSITE" id="PS50886">
    <property type="entry name" value="TRBD"/>
    <property type="match status" value="1"/>
</dbReference>
<keyword id="KW-0030">Aminoacyl-tRNA synthetase</keyword>
<keyword id="KW-0067">ATP-binding</keyword>
<keyword id="KW-0963">Cytoplasm</keyword>
<keyword id="KW-0436">Ligase</keyword>
<keyword id="KW-0479">Metal-binding</keyword>
<keyword id="KW-0547">Nucleotide-binding</keyword>
<keyword id="KW-0648">Protein biosynthesis</keyword>
<keyword id="KW-0694">RNA-binding</keyword>
<keyword id="KW-0820">tRNA-binding</keyword>
<keyword id="KW-0862">Zinc</keyword>
<proteinExistence type="inferred from homology"/>
<feature type="chain" id="PRO_0000331823" description="Methionine--tRNA ligase">
    <location>
        <begin position="1"/>
        <end position="711"/>
    </location>
</feature>
<feature type="domain" description="tRNA-binding" evidence="1">
    <location>
        <begin position="610"/>
        <end position="711"/>
    </location>
</feature>
<feature type="short sequence motif" description="'HIGH' region">
    <location>
        <begin position="15"/>
        <end position="25"/>
    </location>
</feature>
<feature type="short sequence motif" description="'KMSKS' region">
    <location>
        <begin position="336"/>
        <end position="340"/>
    </location>
</feature>
<feature type="binding site" evidence="1">
    <location>
        <position position="147"/>
    </location>
    <ligand>
        <name>Zn(2+)</name>
        <dbReference type="ChEBI" id="CHEBI:29105"/>
    </ligand>
</feature>
<feature type="binding site" evidence="1">
    <location>
        <position position="150"/>
    </location>
    <ligand>
        <name>Zn(2+)</name>
        <dbReference type="ChEBI" id="CHEBI:29105"/>
    </ligand>
</feature>
<feature type="binding site" evidence="1">
    <location>
        <position position="160"/>
    </location>
    <ligand>
        <name>Zn(2+)</name>
        <dbReference type="ChEBI" id="CHEBI:29105"/>
    </ligand>
</feature>
<feature type="binding site" evidence="1">
    <location>
        <position position="163"/>
    </location>
    <ligand>
        <name>Zn(2+)</name>
        <dbReference type="ChEBI" id="CHEBI:29105"/>
    </ligand>
</feature>
<feature type="binding site" evidence="1">
    <location>
        <position position="339"/>
    </location>
    <ligand>
        <name>ATP</name>
        <dbReference type="ChEBI" id="CHEBI:30616"/>
    </ligand>
</feature>
<reference key="1">
    <citation type="journal article" date="2009" name="Appl. Environ. Microbiol.">
        <title>Novel features of the polysaccharide-digesting gliding bacterium Flavobacterium johnsoniae as revealed by genome sequence analysis.</title>
        <authorList>
            <person name="McBride M.J."/>
            <person name="Xie G."/>
            <person name="Martens E.C."/>
            <person name="Lapidus A."/>
            <person name="Henrissat B."/>
            <person name="Rhodes R.G."/>
            <person name="Goltsman E."/>
            <person name="Wang W."/>
            <person name="Xu J."/>
            <person name="Hunnicutt D.W."/>
            <person name="Staroscik A.M."/>
            <person name="Hoover T.R."/>
            <person name="Cheng Y.Q."/>
            <person name="Stein J.L."/>
        </authorList>
    </citation>
    <scope>NUCLEOTIDE SEQUENCE [LARGE SCALE GENOMIC DNA]</scope>
    <source>
        <strain>ATCC 17061 / DSM 2064 / JCM 8514 / BCRC 14874 / CCUG 350202 / NBRC 14942 / NCIMB 11054 / UW101</strain>
    </source>
</reference>